<dbReference type="EMBL" id="X74478">
    <property type="protein sequence ID" value="CAA52568.1"/>
    <property type="molecule type" value="Genomic_DNA"/>
</dbReference>
<dbReference type="PIR" id="S36556">
    <property type="entry name" value="S36556"/>
</dbReference>
<dbReference type="SMR" id="P36829"/>
<dbReference type="Proteomes" id="UP000009121">
    <property type="component" value="Genome"/>
</dbReference>
<dbReference type="GO" id="GO:0030430">
    <property type="term" value="C:host cell cytoplasm"/>
    <property type="evidence" value="ECO:0007669"/>
    <property type="project" value="UniProtKB-SubCell"/>
</dbReference>
<dbReference type="GO" id="GO:0042025">
    <property type="term" value="C:host cell nucleus"/>
    <property type="evidence" value="ECO:0007669"/>
    <property type="project" value="UniProtKB-SubCell"/>
</dbReference>
<dbReference type="GO" id="GO:0003677">
    <property type="term" value="F:DNA binding"/>
    <property type="evidence" value="ECO:0007669"/>
    <property type="project" value="UniProtKB-UniRule"/>
</dbReference>
<dbReference type="GO" id="GO:0003700">
    <property type="term" value="F:DNA-binding transcription factor activity"/>
    <property type="evidence" value="ECO:0007669"/>
    <property type="project" value="UniProtKB-UniRule"/>
</dbReference>
<dbReference type="GO" id="GO:0019904">
    <property type="term" value="F:protein domain specific binding"/>
    <property type="evidence" value="ECO:0007669"/>
    <property type="project" value="UniProtKB-UniRule"/>
</dbReference>
<dbReference type="GO" id="GO:0008270">
    <property type="term" value="F:zinc ion binding"/>
    <property type="evidence" value="ECO:0007669"/>
    <property type="project" value="UniProtKB-KW"/>
</dbReference>
<dbReference type="GO" id="GO:0006351">
    <property type="term" value="P:DNA-templated transcription"/>
    <property type="evidence" value="ECO:0007669"/>
    <property type="project" value="UniProtKB-UniRule"/>
</dbReference>
<dbReference type="GO" id="GO:0039645">
    <property type="term" value="P:symbiont-mediated perturbation of host cell cycle G1/S transition checkpoint"/>
    <property type="evidence" value="ECO:0007669"/>
    <property type="project" value="UniProtKB-UniRule"/>
</dbReference>
<dbReference type="GO" id="GO:0052170">
    <property type="term" value="P:symbiont-mediated suppression of host innate immune response"/>
    <property type="evidence" value="ECO:0007669"/>
    <property type="project" value="UniProtKB-KW"/>
</dbReference>
<dbReference type="GO" id="GO:0039502">
    <property type="term" value="P:symbiont-mediated suppression of host type I interferon-mediated signaling pathway"/>
    <property type="evidence" value="ECO:0007669"/>
    <property type="project" value="UniProtKB-UniRule"/>
</dbReference>
<dbReference type="Gene3D" id="3.30.160.330">
    <property type="match status" value="1"/>
</dbReference>
<dbReference type="HAMAP" id="MF_04004">
    <property type="entry name" value="PPV_E7"/>
    <property type="match status" value="1"/>
</dbReference>
<dbReference type="InterPro" id="IPR000148">
    <property type="entry name" value="Papilloma_E7"/>
</dbReference>
<dbReference type="Pfam" id="PF00527">
    <property type="entry name" value="E7"/>
    <property type="match status" value="1"/>
</dbReference>
<dbReference type="PIRSF" id="PIRSF003407">
    <property type="entry name" value="Papvi_E7"/>
    <property type="match status" value="1"/>
</dbReference>
<dbReference type="SUPFAM" id="SSF161234">
    <property type="entry name" value="E7 C-terminal domain-like"/>
    <property type="match status" value="1"/>
</dbReference>
<name>VE7_HPV40</name>
<organismHost>
    <name type="scientific">Homo sapiens</name>
    <name type="common">Human</name>
    <dbReference type="NCBI Taxonomy" id="9606"/>
</organismHost>
<gene>
    <name evidence="1" type="primary">E7</name>
</gene>
<keyword id="KW-0010">Activator</keyword>
<keyword id="KW-0238">DNA-binding</keyword>
<keyword id="KW-0244">Early protein</keyword>
<keyword id="KW-1078">G1/S host cell cycle checkpoint dysregulation by virus</keyword>
<keyword id="KW-1035">Host cytoplasm</keyword>
<keyword id="KW-1048">Host nucleus</keyword>
<keyword id="KW-0945">Host-virus interaction</keyword>
<keyword id="KW-1090">Inhibition of host innate immune response by virus</keyword>
<keyword id="KW-1114">Inhibition of host interferon signaling pathway by virus</keyword>
<keyword id="KW-0922">Interferon antiviral system evasion</keyword>
<keyword id="KW-0479">Metal-binding</keyword>
<keyword id="KW-1121">Modulation of host cell cycle by virus</keyword>
<keyword id="KW-0553">Oncogene</keyword>
<keyword id="KW-0804">Transcription</keyword>
<keyword id="KW-0805">Transcription regulation</keyword>
<keyword id="KW-0899">Viral immunoevasion</keyword>
<keyword id="KW-0862">Zinc</keyword>
<keyword id="KW-0863">Zinc-finger</keyword>
<organism>
    <name type="scientific">Human papillomavirus 40</name>
    <dbReference type="NCBI Taxonomy" id="10615"/>
    <lineage>
        <taxon>Viruses</taxon>
        <taxon>Monodnaviria</taxon>
        <taxon>Shotokuvirae</taxon>
        <taxon>Cossaviricota</taxon>
        <taxon>Papovaviricetes</taxon>
        <taxon>Zurhausenvirales</taxon>
        <taxon>Papillomaviridae</taxon>
        <taxon>Firstpapillomavirinae</taxon>
        <taxon>Alphapapillomavirus</taxon>
        <taxon>Alphapapillomavirus 8</taxon>
    </lineage>
</organism>
<feature type="chain" id="PRO_0000133438" description="Protein E7">
    <location>
        <begin position="1"/>
        <end position="111"/>
    </location>
</feature>
<feature type="zinc finger region" evidence="1">
    <location>
        <begin position="71"/>
        <end position="107"/>
    </location>
</feature>
<feature type="region of interest" description="E7 terminal domain" evidence="1">
    <location>
        <begin position="1"/>
        <end position="44"/>
    </location>
</feature>
<feature type="region of interest" description="Disordered" evidence="2">
    <location>
        <begin position="28"/>
        <end position="54"/>
    </location>
</feature>
<feature type="short sequence motif" description="LXCXE motif; interaction with host RB1 and TMEM173/STING" evidence="1">
    <location>
        <begin position="22"/>
        <end position="26"/>
    </location>
</feature>
<feature type="short sequence motif" description="Nuclear export signal" evidence="1">
    <location>
        <begin position="89"/>
        <end position="97"/>
    </location>
</feature>
<feature type="compositionally biased region" description="Acidic residues" evidence="2">
    <location>
        <begin position="29"/>
        <end position="38"/>
    </location>
</feature>
<feature type="compositionally biased region" description="Basic and acidic residues" evidence="2">
    <location>
        <begin position="39"/>
        <end position="52"/>
    </location>
</feature>
<proteinExistence type="inferred from homology"/>
<reference key="1">
    <citation type="journal article" date="1994" name="Curr. Top. Microbiol. Immunol.">
        <title>Primer-directed sequencing of human papillomavirus types.</title>
        <authorList>
            <person name="Delius H."/>
            <person name="Hofmann B."/>
        </authorList>
    </citation>
    <scope>NUCLEOTIDE SEQUENCE [GENOMIC DNA]</scope>
</reference>
<reference key="2">
    <citation type="journal article" date="2002" name="Rev. Med. Virol.">
        <title>Interactions of SV40 large T antigen and other viral proteins with retinoblastoma tumour suppressor.</title>
        <authorList>
            <person name="Lee C."/>
            <person name="Cho Y."/>
        </authorList>
    </citation>
    <scope>REVIEW</scope>
</reference>
<evidence type="ECO:0000255" key="1">
    <source>
        <dbReference type="HAMAP-Rule" id="MF_04004"/>
    </source>
</evidence>
<evidence type="ECO:0000256" key="2">
    <source>
        <dbReference type="SAM" id="MobiDB-lite"/>
    </source>
</evidence>
<comment type="function">
    <text evidence="1">Plays a role in viral genome replication by driving entry of quiescent cells into the cell cycle. Stimulation of progression from G1 to S phase allows the virus to efficiently use the cellular DNA replicating machinery to achieve viral genome replication. E7 protein has both transforming and trans-activating activities. Induces the disassembly of the E2F1 transcription factor from RB1, with subsequent transcriptional activation of E2F1-regulated S-phase genes. Interferes with host histone deacetylation mediated by HDAC1 and HDAC2, leading to transcription activation. Also plays a role in the inhibition of both antiviral and antiproliferative functions of host interferon alpha. Interaction with host TMEM173/STING impairs the ability of TMEM173/STING to sense cytosolic DNA and promote the production of type I interferon (IFN-alpha and IFN-beta).</text>
</comment>
<comment type="subunit">
    <text evidence="1">Homodimer. Homooligomer. Interacts with host RB1; this interaction induces dissociation of RB1-E2F1 complex thereby disrupting RB1 activity. Interacts with host EP300; this interaction represses EP300 transcriptional activity. Interacts with protein E2; this interaction inhibits E7 oncogenic activity. Interacts with host TMEM173/STING; this interaction impairs the ability of TMEM173/STING to sense cytosolic DNA and promote the production of type I interferon (IFN-alpha and IFN-beta).</text>
</comment>
<comment type="subcellular location">
    <subcellularLocation>
        <location evidence="1">Host cytoplasm</location>
    </subcellularLocation>
    <subcellularLocation>
        <location evidence="1">Host nucleus</location>
    </subcellularLocation>
    <text evidence="1">Predominantly found in the host nucleus.</text>
</comment>
<comment type="domain">
    <text evidence="1">The E7 terminal domain is an intrinsically disordered domain, whose flexibility and conformational transitions confer target adaptability to the oncoprotein. It allows adaptation to a variety of protein targets and exposes the PEST degradation sequence that regulates its turnover in the cell.</text>
</comment>
<comment type="PTM">
    <text evidence="1">Highly phosphorylated.</text>
</comment>
<comment type="similarity">
    <text evidence="1">Belongs to the papillomaviridae E7 protein family.</text>
</comment>
<accession>P36829</accession>
<protein>
    <recommendedName>
        <fullName evidence="1">Protein E7</fullName>
    </recommendedName>
</protein>
<sequence length="111" mass="12572">MHGERPTLGDIVLNLHPEPVCLNCNEQLDSSDSEDDHEQDQLDSLHSREREQPTQQDLQVNLQSFKVVTRCVFCQCLVRLAVHCSITDITQFQQLLMGTLHIVCPNCAATE</sequence>